<comment type="function">
    <text evidence="1">Participates actively in the response to hyperosmotic and heat shock by preventing the aggregation of stress-denatured proteins and by disaggregating proteins, also in an autonomous, DnaK-independent fashion. Unfolded proteins bind initially to DnaJ; upon interaction with the DnaJ-bound protein, DnaK hydrolyzes its bound ATP, resulting in the formation of a stable complex. GrpE releases ADP from DnaK; ATP binding to DnaK triggers the release of the substrate protein, thus completing the reaction cycle. Several rounds of ATP-dependent interactions between DnaJ, DnaK and GrpE are required for fully efficient folding. Also involved, together with DnaK and GrpE, in the DNA replication of plasmids through activation of initiation proteins.</text>
</comment>
<comment type="cofactor">
    <cofactor evidence="1">
        <name>Zn(2+)</name>
        <dbReference type="ChEBI" id="CHEBI:29105"/>
    </cofactor>
    <text evidence="1">Binds 2 Zn(2+) ions per monomer.</text>
</comment>
<comment type="subunit">
    <text evidence="1">Homodimer.</text>
</comment>
<comment type="subcellular location">
    <subcellularLocation>
        <location evidence="1">Cytoplasm</location>
    </subcellularLocation>
</comment>
<comment type="domain">
    <text evidence="1">The J domain is necessary and sufficient to stimulate DnaK ATPase activity. Zinc center 1 plays an important role in the autonomous, DnaK-independent chaperone activity of DnaJ. Zinc center 2 is essential for interaction with DnaK and for DnaJ activity.</text>
</comment>
<comment type="similarity">
    <text evidence="1">Belongs to the DnaJ family.</text>
</comment>
<dbReference type="EMBL" id="CP000857">
    <property type="protein sequence ID" value="ACN44209.1"/>
    <property type="molecule type" value="Genomic_DNA"/>
</dbReference>
<dbReference type="RefSeq" id="WP_001119009.1">
    <property type="nucleotide sequence ID" value="NC_012125.1"/>
</dbReference>
<dbReference type="SMR" id="C0Q4F4"/>
<dbReference type="KEGG" id="sei:SPC_0014"/>
<dbReference type="HOGENOM" id="CLU_017633_0_7_6"/>
<dbReference type="Proteomes" id="UP000001599">
    <property type="component" value="Chromosome"/>
</dbReference>
<dbReference type="GO" id="GO:0005737">
    <property type="term" value="C:cytoplasm"/>
    <property type="evidence" value="ECO:0007669"/>
    <property type="project" value="UniProtKB-SubCell"/>
</dbReference>
<dbReference type="GO" id="GO:0005524">
    <property type="term" value="F:ATP binding"/>
    <property type="evidence" value="ECO:0007669"/>
    <property type="project" value="InterPro"/>
</dbReference>
<dbReference type="GO" id="GO:0031072">
    <property type="term" value="F:heat shock protein binding"/>
    <property type="evidence" value="ECO:0007669"/>
    <property type="project" value="InterPro"/>
</dbReference>
<dbReference type="GO" id="GO:0051082">
    <property type="term" value="F:unfolded protein binding"/>
    <property type="evidence" value="ECO:0007669"/>
    <property type="project" value="UniProtKB-UniRule"/>
</dbReference>
<dbReference type="GO" id="GO:0008270">
    <property type="term" value="F:zinc ion binding"/>
    <property type="evidence" value="ECO:0007669"/>
    <property type="project" value="UniProtKB-UniRule"/>
</dbReference>
<dbReference type="GO" id="GO:0051085">
    <property type="term" value="P:chaperone cofactor-dependent protein refolding"/>
    <property type="evidence" value="ECO:0007669"/>
    <property type="project" value="TreeGrafter"/>
</dbReference>
<dbReference type="GO" id="GO:0006260">
    <property type="term" value="P:DNA replication"/>
    <property type="evidence" value="ECO:0007669"/>
    <property type="project" value="UniProtKB-KW"/>
</dbReference>
<dbReference type="GO" id="GO:0042026">
    <property type="term" value="P:protein refolding"/>
    <property type="evidence" value="ECO:0007669"/>
    <property type="project" value="TreeGrafter"/>
</dbReference>
<dbReference type="GO" id="GO:0009408">
    <property type="term" value="P:response to heat"/>
    <property type="evidence" value="ECO:0007669"/>
    <property type="project" value="InterPro"/>
</dbReference>
<dbReference type="CDD" id="cd06257">
    <property type="entry name" value="DnaJ"/>
    <property type="match status" value="1"/>
</dbReference>
<dbReference type="CDD" id="cd10747">
    <property type="entry name" value="DnaJ_C"/>
    <property type="match status" value="1"/>
</dbReference>
<dbReference type="CDD" id="cd10719">
    <property type="entry name" value="DnaJ_zf"/>
    <property type="match status" value="1"/>
</dbReference>
<dbReference type="FunFam" id="1.10.287.110:FF:000003">
    <property type="entry name" value="Molecular chaperone DnaJ"/>
    <property type="match status" value="1"/>
</dbReference>
<dbReference type="FunFam" id="2.10.230.10:FF:000002">
    <property type="entry name" value="Molecular chaperone DnaJ"/>
    <property type="match status" value="1"/>
</dbReference>
<dbReference type="FunFam" id="2.60.260.20:FF:000004">
    <property type="entry name" value="Molecular chaperone DnaJ"/>
    <property type="match status" value="1"/>
</dbReference>
<dbReference type="Gene3D" id="1.10.287.110">
    <property type="entry name" value="DnaJ domain"/>
    <property type="match status" value="1"/>
</dbReference>
<dbReference type="Gene3D" id="2.10.230.10">
    <property type="entry name" value="Heat shock protein DnaJ, cysteine-rich domain"/>
    <property type="match status" value="1"/>
</dbReference>
<dbReference type="Gene3D" id="2.60.260.20">
    <property type="entry name" value="Urease metallochaperone UreE, N-terminal domain"/>
    <property type="match status" value="2"/>
</dbReference>
<dbReference type="HAMAP" id="MF_01152">
    <property type="entry name" value="DnaJ"/>
    <property type="match status" value="1"/>
</dbReference>
<dbReference type="InterPro" id="IPR012724">
    <property type="entry name" value="DnaJ"/>
</dbReference>
<dbReference type="InterPro" id="IPR002939">
    <property type="entry name" value="DnaJ_C"/>
</dbReference>
<dbReference type="InterPro" id="IPR001623">
    <property type="entry name" value="DnaJ_domain"/>
</dbReference>
<dbReference type="InterPro" id="IPR018253">
    <property type="entry name" value="DnaJ_domain_CS"/>
</dbReference>
<dbReference type="InterPro" id="IPR008971">
    <property type="entry name" value="HSP40/DnaJ_pept-bd"/>
</dbReference>
<dbReference type="InterPro" id="IPR001305">
    <property type="entry name" value="HSP_DnaJ_Cys-rich_dom"/>
</dbReference>
<dbReference type="InterPro" id="IPR036410">
    <property type="entry name" value="HSP_DnaJ_Cys-rich_dom_sf"/>
</dbReference>
<dbReference type="InterPro" id="IPR036869">
    <property type="entry name" value="J_dom_sf"/>
</dbReference>
<dbReference type="NCBIfam" id="TIGR02349">
    <property type="entry name" value="DnaJ_bact"/>
    <property type="match status" value="1"/>
</dbReference>
<dbReference type="NCBIfam" id="NF008035">
    <property type="entry name" value="PRK10767.1"/>
    <property type="match status" value="1"/>
</dbReference>
<dbReference type="PANTHER" id="PTHR43096:SF48">
    <property type="entry name" value="CHAPERONE PROTEIN DNAJ"/>
    <property type="match status" value="1"/>
</dbReference>
<dbReference type="PANTHER" id="PTHR43096">
    <property type="entry name" value="DNAJ HOMOLOG 1, MITOCHONDRIAL-RELATED"/>
    <property type="match status" value="1"/>
</dbReference>
<dbReference type="Pfam" id="PF00226">
    <property type="entry name" value="DnaJ"/>
    <property type="match status" value="1"/>
</dbReference>
<dbReference type="Pfam" id="PF01556">
    <property type="entry name" value="DnaJ_C"/>
    <property type="match status" value="1"/>
</dbReference>
<dbReference type="Pfam" id="PF00684">
    <property type="entry name" value="DnaJ_CXXCXGXG"/>
    <property type="match status" value="1"/>
</dbReference>
<dbReference type="PRINTS" id="PR00625">
    <property type="entry name" value="JDOMAIN"/>
</dbReference>
<dbReference type="SMART" id="SM00271">
    <property type="entry name" value="DnaJ"/>
    <property type="match status" value="1"/>
</dbReference>
<dbReference type="SUPFAM" id="SSF46565">
    <property type="entry name" value="Chaperone J-domain"/>
    <property type="match status" value="1"/>
</dbReference>
<dbReference type="SUPFAM" id="SSF57938">
    <property type="entry name" value="DnaJ/Hsp40 cysteine-rich domain"/>
    <property type="match status" value="1"/>
</dbReference>
<dbReference type="SUPFAM" id="SSF49493">
    <property type="entry name" value="HSP40/DnaJ peptide-binding domain"/>
    <property type="match status" value="2"/>
</dbReference>
<dbReference type="PROSITE" id="PS00636">
    <property type="entry name" value="DNAJ_1"/>
    <property type="match status" value="1"/>
</dbReference>
<dbReference type="PROSITE" id="PS50076">
    <property type="entry name" value="DNAJ_2"/>
    <property type="match status" value="1"/>
</dbReference>
<dbReference type="PROSITE" id="PS51188">
    <property type="entry name" value="ZF_CR"/>
    <property type="match status" value="1"/>
</dbReference>
<evidence type="ECO:0000255" key="1">
    <source>
        <dbReference type="HAMAP-Rule" id="MF_01152"/>
    </source>
</evidence>
<gene>
    <name evidence="1" type="primary">dnaJ</name>
    <name type="ordered locus">SPC_0014</name>
</gene>
<keyword id="KW-0143">Chaperone</keyword>
<keyword id="KW-0963">Cytoplasm</keyword>
<keyword id="KW-0235">DNA replication</keyword>
<keyword id="KW-0479">Metal-binding</keyword>
<keyword id="KW-0677">Repeat</keyword>
<keyword id="KW-0346">Stress response</keyword>
<keyword id="KW-0862">Zinc</keyword>
<keyword id="KW-0863">Zinc-finger</keyword>
<accession>C0Q4F4</accession>
<protein>
    <recommendedName>
        <fullName evidence="1">Chaperone protein DnaJ</fullName>
    </recommendedName>
</protein>
<proteinExistence type="inferred from homology"/>
<sequence length="379" mass="41313">MAKRDYYEILGVSKTAEEREIKKAYKRLAMKYHPDRNQGDKEAEAKFKEIKEAYEVLTDAQKRAAYDQYGHAAFEQGGMGGGFGGGFNGGADFSDIFGDVFGDIFGGGRGRQRAARGADLRYNMDLTLEEAVRGVTKEIRIPTLEECDVCHGSGAKAGTQPQTCPTCHGSGQVQMRQGFFAVQQTCPHCQGRGTLIKDPCHKCHGHGRVEKSKTLSVKIPAGVDTGDRIRLAGEGEAGEHGAPAGDLYVQVQVKQHPIFEREGNNLYCEVPINFAMAALGGEIEVPTLDGRVMLKVPSETQTGKLFRMRGKGVKSVRGGAQGDLLCRVVVETPVGLSEKQKQLLKDLQESFGGPTGEKNSPRSKSFFDGVKKFFDDLTR</sequence>
<reference key="1">
    <citation type="journal article" date="2009" name="PLoS ONE">
        <title>Salmonella paratyphi C: genetic divergence from Salmonella choleraesuis and pathogenic convergence with Salmonella typhi.</title>
        <authorList>
            <person name="Liu W.-Q."/>
            <person name="Feng Y."/>
            <person name="Wang Y."/>
            <person name="Zou Q.-H."/>
            <person name="Chen F."/>
            <person name="Guo J.-T."/>
            <person name="Peng Y.-H."/>
            <person name="Jin Y."/>
            <person name="Li Y.-G."/>
            <person name="Hu S.-N."/>
            <person name="Johnston R.N."/>
            <person name="Liu G.-R."/>
            <person name="Liu S.-L."/>
        </authorList>
    </citation>
    <scope>NUCLEOTIDE SEQUENCE [LARGE SCALE GENOMIC DNA]</scope>
    <source>
        <strain>RKS4594</strain>
    </source>
</reference>
<feature type="chain" id="PRO_1000164277" description="Chaperone protein DnaJ">
    <location>
        <begin position="1"/>
        <end position="379"/>
    </location>
</feature>
<feature type="domain" description="J" evidence="1">
    <location>
        <begin position="5"/>
        <end position="70"/>
    </location>
</feature>
<feature type="repeat" description="CXXCXGXG motif">
    <location>
        <begin position="147"/>
        <end position="154"/>
    </location>
</feature>
<feature type="repeat" description="CXXCXGXG motif">
    <location>
        <begin position="164"/>
        <end position="171"/>
    </location>
</feature>
<feature type="repeat" description="CXXCXGXG motif">
    <location>
        <begin position="186"/>
        <end position="193"/>
    </location>
</feature>
<feature type="repeat" description="CXXCXGXG motif">
    <location>
        <begin position="200"/>
        <end position="207"/>
    </location>
</feature>
<feature type="zinc finger region" description="CR-type" evidence="1">
    <location>
        <begin position="134"/>
        <end position="212"/>
    </location>
</feature>
<feature type="binding site" evidence="1">
    <location>
        <position position="147"/>
    </location>
    <ligand>
        <name>Zn(2+)</name>
        <dbReference type="ChEBI" id="CHEBI:29105"/>
        <label>1</label>
    </ligand>
</feature>
<feature type="binding site" evidence="1">
    <location>
        <position position="150"/>
    </location>
    <ligand>
        <name>Zn(2+)</name>
        <dbReference type="ChEBI" id="CHEBI:29105"/>
        <label>1</label>
    </ligand>
</feature>
<feature type="binding site" evidence="1">
    <location>
        <position position="164"/>
    </location>
    <ligand>
        <name>Zn(2+)</name>
        <dbReference type="ChEBI" id="CHEBI:29105"/>
        <label>2</label>
    </ligand>
</feature>
<feature type="binding site" evidence="1">
    <location>
        <position position="167"/>
    </location>
    <ligand>
        <name>Zn(2+)</name>
        <dbReference type="ChEBI" id="CHEBI:29105"/>
        <label>2</label>
    </ligand>
</feature>
<feature type="binding site" evidence="1">
    <location>
        <position position="186"/>
    </location>
    <ligand>
        <name>Zn(2+)</name>
        <dbReference type="ChEBI" id="CHEBI:29105"/>
        <label>2</label>
    </ligand>
</feature>
<feature type="binding site" evidence="1">
    <location>
        <position position="189"/>
    </location>
    <ligand>
        <name>Zn(2+)</name>
        <dbReference type="ChEBI" id="CHEBI:29105"/>
        <label>2</label>
    </ligand>
</feature>
<feature type="binding site" evidence="1">
    <location>
        <position position="200"/>
    </location>
    <ligand>
        <name>Zn(2+)</name>
        <dbReference type="ChEBI" id="CHEBI:29105"/>
        <label>1</label>
    </ligand>
</feature>
<feature type="binding site" evidence="1">
    <location>
        <position position="203"/>
    </location>
    <ligand>
        <name>Zn(2+)</name>
        <dbReference type="ChEBI" id="CHEBI:29105"/>
        <label>1</label>
    </ligand>
</feature>
<organism>
    <name type="scientific">Salmonella paratyphi C (strain RKS4594)</name>
    <dbReference type="NCBI Taxonomy" id="476213"/>
    <lineage>
        <taxon>Bacteria</taxon>
        <taxon>Pseudomonadati</taxon>
        <taxon>Pseudomonadota</taxon>
        <taxon>Gammaproteobacteria</taxon>
        <taxon>Enterobacterales</taxon>
        <taxon>Enterobacteriaceae</taxon>
        <taxon>Salmonella</taxon>
    </lineage>
</organism>
<name>DNAJ_SALPC</name>